<evidence type="ECO:0000255" key="1">
    <source>
        <dbReference type="HAMAP-Rule" id="MF_00422"/>
    </source>
</evidence>
<gene>
    <name evidence="1" type="primary">secE</name>
    <name type="ordered locus">Msed_1632</name>
</gene>
<proteinExistence type="inferred from homology"/>
<feature type="chain" id="PRO_1000072301" description="Protein translocase subunit SecE">
    <location>
        <begin position="1"/>
        <end position="59"/>
    </location>
</feature>
<feature type="transmembrane region" description="Helical" evidence="1">
    <location>
        <begin position="37"/>
        <end position="57"/>
    </location>
</feature>
<organism>
    <name type="scientific">Metallosphaera sedula (strain ATCC 51363 / DSM 5348 / JCM 9185 / NBRC 15509 / TH2)</name>
    <dbReference type="NCBI Taxonomy" id="399549"/>
    <lineage>
        <taxon>Archaea</taxon>
        <taxon>Thermoproteota</taxon>
        <taxon>Thermoprotei</taxon>
        <taxon>Sulfolobales</taxon>
        <taxon>Sulfolobaceae</taxon>
        <taxon>Metallosphaera</taxon>
    </lineage>
</organism>
<sequence length="59" mass="6776">MGLADRIKKLREDWKRIISVAKKPDKSMFYLNLRVTLIVLLFVGLLAFLVQLAFSILLG</sequence>
<name>SECE_METS5</name>
<comment type="function">
    <text evidence="1">Essential subunit of the Sec protein translocation channel SecYEG. Clamps together the 2 halves of SecY. May contact the channel plug during translocation.</text>
</comment>
<comment type="subunit">
    <text evidence="1">Component of the Sec protein translocase complex. Heterotrimer consisting of SecY (alpha), SecG (beta) and SecE (gamma) subunits. The heterotrimers can form oligomers, although 1 heterotrimer is thought to be able to translocate proteins. Interacts with the ribosome. May interact with SecDF, and other proteins may be involved.</text>
</comment>
<comment type="subcellular location">
    <subcellularLocation>
        <location evidence="1">Cell membrane</location>
        <topology evidence="1">Single-pass membrane protein</topology>
    </subcellularLocation>
</comment>
<comment type="similarity">
    <text evidence="1">Belongs to the SecE/SEC61-gamma family.</text>
</comment>
<reference key="1">
    <citation type="journal article" date="2008" name="Appl. Environ. Microbiol.">
        <title>The genome sequence of the metal-mobilizing, extremely thermoacidophilic archaeon Metallosphaera sedula provides insights into bioleaching-associated metabolism.</title>
        <authorList>
            <person name="Auernik K.S."/>
            <person name="Maezato Y."/>
            <person name="Blum P.H."/>
            <person name="Kelly R.M."/>
        </authorList>
    </citation>
    <scope>NUCLEOTIDE SEQUENCE [LARGE SCALE GENOMIC DNA]</scope>
    <source>
        <strain>ATCC 51363 / DSM 5348 / JCM 9185 / NBRC 15509 / TH2</strain>
    </source>
</reference>
<accession>A4YH85</accession>
<protein>
    <recommendedName>
        <fullName evidence="1">Protein translocase subunit SecE</fullName>
    </recommendedName>
    <alternativeName>
        <fullName evidence="1">Protein transport protein Sec61 gamma subunit homolog</fullName>
    </alternativeName>
</protein>
<keyword id="KW-1003">Cell membrane</keyword>
<keyword id="KW-0472">Membrane</keyword>
<keyword id="KW-0653">Protein transport</keyword>
<keyword id="KW-1185">Reference proteome</keyword>
<keyword id="KW-0811">Translocation</keyword>
<keyword id="KW-0812">Transmembrane</keyword>
<keyword id="KW-1133">Transmembrane helix</keyword>
<keyword id="KW-0813">Transport</keyword>
<dbReference type="EMBL" id="CP000682">
    <property type="protein sequence ID" value="ABP95787.1"/>
    <property type="molecule type" value="Genomic_DNA"/>
</dbReference>
<dbReference type="RefSeq" id="WP_012021574.1">
    <property type="nucleotide sequence ID" value="NZ_CP139956.1"/>
</dbReference>
<dbReference type="SMR" id="A4YH85"/>
<dbReference type="STRING" id="399549.Msed_1632"/>
<dbReference type="KEGG" id="mse:Msed_1632"/>
<dbReference type="eggNOG" id="arCOG02204">
    <property type="taxonomic scope" value="Archaea"/>
</dbReference>
<dbReference type="HOGENOM" id="CLU_191921_1_0_2"/>
<dbReference type="Proteomes" id="UP000000242">
    <property type="component" value="Chromosome"/>
</dbReference>
<dbReference type="GO" id="GO:0005886">
    <property type="term" value="C:plasma membrane"/>
    <property type="evidence" value="ECO:0007669"/>
    <property type="project" value="UniProtKB-SubCell"/>
</dbReference>
<dbReference type="GO" id="GO:0008320">
    <property type="term" value="F:protein transmembrane transporter activity"/>
    <property type="evidence" value="ECO:0007669"/>
    <property type="project" value="UniProtKB-UniRule"/>
</dbReference>
<dbReference type="GO" id="GO:0065002">
    <property type="term" value="P:intracellular protein transmembrane transport"/>
    <property type="evidence" value="ECO:0007669"/>
    <property type="project" value="UniProtKB-UniRule"/>
</dbReference>
<dbReference type="GO" id="GO:0009306">
    <property type="term" value="P:protein secretion"/>
    <property type="evidence" value="ECO:0007669"/>
    <property type="project" value="UniProtKB-UniRule"/>
</dbReference>
<dbReference type="GO" id="GO:0006605">
    <property type="term" value="P:protein targeting"/>
    <property type="evidence" value="ECO:0007669"/>
    <property type="project" value="UniProtKB-UniRule"/>
</dbReference>
<dbReference type="Gene3D" id="1.20.5.820">
    <property type="entry name" value="Preprotein translocase SecE subunit"/>
    <property type="match status" value="1"/>
</dbReference>
<dbReference type="HAMAP" id="MF_00422">
    <property type="entry name" value="SecE"/>
    <property type="match status" value="1"/>
</dbReference>
<dbReference type="InterPro" id="IPR023391">
    <property type="entry name" value="Prot_translocase_SecE_dom_sf"/>
</dbReference>
<dbReference type="InterPro" id="IPR001901">
    <property type="entry name" value="Translocase_SecE/Sec61-g"/>
</dbReference>
<dbReference type="NCBIfam" id="NF006906">
    <property type="entry name" value="PRK09400.1-1"/>
    <property type="match status" value="1"/>
</dbReference>
<dbReference type="SUPFAM" id="SSF103456">
    <property type="entry name" value="Preprotein translocase SecE subunit"/>
    <property type="match status" value="1"/>
</dbReference>